<proteinExistence type="evidence at transcript level"/>
<comment type="function">
    <text>Removal of H(2)O(2), oxidation of toxic reductants, biosynthesis and degradation of lignin, suberization, auxin catabolism, response to environmental stresses such as wounding, pathogen attack and oxidative stress. These functions might be dependent on each isozyme/isoform in each plant tissue.</text>
</comment>
<comment type="catalytic activity">
    <reaction>
        <text>2 a phenolic donor + H2O2 = 2 a phenolic radical donor + 2 H2O</text>
        <dbReference type="Rhea" id="RHEA:56136"/>
        <dbReference type="ChEBI" id="CHEBI:15377"/>
        <dbReference type="ChEBI" id="CHEBI:16240"/>
        <dbReference type="ChEBI" id="CHEBI:139520"/>
        <dbReference type="ChEBI" id="CHEBI:139521"/>
        <dbReference type="EC" id="1.11.1.7"/>
    </reaction>
</comment>
<comment type="cofactor">
    <cofactor evidence="2">
        <name>heme b</name>
        <dbReference type="ChEBI" id="CHEBI:60344"/>
    </cofactor>
    <text evidence="2">Binds 1 heme b (iron(II)-protoporphyrin IX) group per subunit.</text>
</comment>
<comment type="cofactor">
    <cofactor evidence="2">
        <name>Ca(2+)</name>
        <dbReference type="ChEBI" id="CHEBI:29108"/>
    </cofactor>
    <text evidence="2">Binds 2 calcium ions per subunit.</text>
</comment>
<comment type="subcellular location">
    <subcellularLocation>
        <location evidence="2">Secreted</location>
    </subcellularLocation>
</comment>
<comment type="alternative products">
    <event type="alternative splicing"/>
    <isoform>
        <id>Q9FKA4-1</id>
        <name>1</name>
        <sequence type="displayed"/>
    </isoform>
    <text>A number of isoforms are produced. According to EST sequences.</text>
</comment>
<comment type="tissue specificity">
    <text evidence="4">Mainly expressed in roots.</text>
</comment>
<comment type="induction">
    <text evidence="3">Transiently induced a few minutes after mechanical wounding.</text>
</comment>
<comment type="miscellaneous">
    <text>There are 73 peroxidase genes in A.thaliana.</text>
</comment>
<comment type="similarity">
    <text evidence="2">Belongs to the peroxidase family. Classical plant (class III) peroxidase subfamily.</text>
</comment>
<gene>
    <name type="primary">PER62</name>
    <name type="synonym">P62</name>
    <name type="ordered locus">At5g39580</name>
    <name type="ORF">MIJ24.50</name>
    <name type="ORF">MIJ24.7</name>
</gene>
<dbReference type="EC" id="1.11.1.7"/>
<dbReference type="EMBL" id="AB012243">
    <property type="protein sequence ID" value="BAB08889.1"/>
    <property type="molecule type" value="Genomic_DNA"/>
</dbReference>
<dbReference type="EMBL" id="CP002688">
    <property type="protein sequence ID" value="AED94449.1"/>
    <property type="molecule type" value="Genomic_DNA"/>
</dbReference>
<dbReference type="EMBL" id="BT004203">
    <property type="protein sequence ID" value="AAO42221.1"/>
    <property type="molecule type" value="mRNA"/>
</dbReference>
<dbReference type="EMBL" id="BT005402">
    <property type="protein sequence ID" value="AAO63822.1"/>
    <property type="molecule type" value="mRNA"/>
</dbReference>
<dbReference type="EMBL" id="Y11788">
    <property type="protein sequence ID" value="CAA72484.1"/>
    <property type="molecule type" value="mRNA"/>
</dbReference>
<dbReference type="RefSeq" id="NP_198774.1">
    <molecule id="Q9FKA4-1"/>
    <property type="nucleotide sequence ID" value="NM_123320.4"/>
</dbReference>
<dbReference type="SMR" id="Q9FKA4"/>
<dbReference type="BioGRID" id="19205">
    <property type="interactions" value="1"/>
</dbReference>
<dbReference type="FunCoup" id="Q9FKA4">
    <property type="interactions" value="128"/>
</dbReference>
<dbReference type="STRING" id="3702.Q9FKA4"/>
<dbReference type="PeroxiBase" id="228">
    <property type="entry name" value="AtPrx62"/>
</dbReference>
<dbReference type="GlyCosmos" id="Q9FKA4">
    <property type="glycosylation" value="2 sites, No reported glycans"/>
</dbReference>
<dbReference type="GlyGen" id="Q9FKA4">
    <property type="glycosylation" value="2 sites"/>
</dbReference>
<dbReference type="PaxDb" id="3702-AT5G39580.1"/>
<dbReference type="ProteomicsDB" id="236390">
    <molecule id="Q9FKA4-1"/>
</dbReference>
<dbReference type="EnsemblPlants" id="AT5G39580.1">
    <molecule id="Q9FKA4-1"/>
    <property type="protein sequence ID" value="AT5G39580.1"/>
    <property type="gene ID" value="AT5G39580"/>
</dbReference>
<dbReference type="GeneID" id="833954"/>
<dbReference type="Gramene" id="AT5G39580.1">
    <molecule id="Q9FKA4-1"/>
    <property type="protein sequence ID" value="AT5G39580.1"/>
    <property type="gene ID" value="AT5G39580"/>
</dbReference>
<dbReference type="KEGG" id="ath:AT5G39580"/>
<dbReference type="Araport" id="AT5G39580"/>
<dbReference type="TAIR" id="AT5G39580"/>
<dbReference type="eggNOG" id="ENOG502SI6S">
    <property type="taxonomic scope" value="Eukaryota"/>
</dbReference>
<dbReference type="HOGENOM" id="CLU_010543_0_3_1"/>
<dbReference type="InParanoid" id="Q9FKA4"/>
<dbReference type="OMA" id="SDHVLWT"/>
<dbReference type="PhylomeDB" id="Q9FKA4"/>
<dbReference type="BioCyc" id="ARA:AT5G39580-MONOMER"/>
<dbReference type="PRO" id="PR:Q9FKA4"/>
<dbReference type="Proteomes" id="UP000006548">
    <property type="component" value="Chromosome 5"/>
</dbReference>
<dbReference type="ExpressionAtlas" id="Q9FKA4">
    <property type="expression patterns" value="baseline and differential"/>
</dbReference>
<dbReference type="GO" id="GO:0005576">
    <property type="term" value="C:extracellular region"/>
    <property type="evidence" value="ECO:0007669"/>
    <property type="project" value="UniProtKB-SubCell"/>
</dbReference>
<dbReference type="GO" id="GO:0005794">
    <property type="term" value="C:Golgi apparatus"/>
    <property type="evidence" value="ECO:0007005"/>
    <property type="project" value="TAIR"/>
</dbReference>
<dbReference type="GO" id="GO:0020037">
    <property type="term" value="F:heme binding"/>
    <property type="evidence" value="ECO:0007669"/>
    <property type="project" value="InterPro"/>
</dbReference>
<dbReference type="GO" id="GO:0140825">
    <property type="term" value="F:lactoperoxidase activity"/>
    <property type="evidence" value="ECO:0007669"/>
    <property type="project" value="UniProtKB-EC"/>
</dbReference>
<dbReference type="GO" id="GO:0046872">
    <property type="term" value="F:metal ion binding"/>
    <property type="evidence" value="ECO:0007669"/>
    <property type="project" value="UniProtKB-KW"/>
</dbReference>
<dbReference type="GO" id="GO:0004601">
    <property type="term" value="F:peroxidase activity"/>
    <property type="evidence" value="ECO:0000314"/>
    <property type="project" value="TAIR"/>
</dbReference>
<dbReference type="GO" id="GO:0050832">
    <property type="term" value="P:defense response to fungus"/>
    <property type="evidence" value="ECO:0000315"/>
    <property type="project" value="TAIR"/>
</dbReference>
<dbReference type="GO" id="GO:0042744">
    <property type="term" value="P:hydrogen peroxide catabolic process"/>
    <property type="evidence" value="ECO:0007669"/>
    <property type="project" value="UniProtKB-KW"/>
</dbReference>
<dbReference type="GO" id="GO:0006979">
    <property type="term" value="P:response to oxidative stress"/>
    <property type="evidence" value="ECO:0007669"/>
    <property type="project" value="InterPro"/>
</dbReference>
<dbReference type="CDD" id="cd00693">
    <property type="entry name" value="secretory_peroxidase"/>
    <property type="match status" value="1"/>
</dbReference>
<dbReference type="FunFam" id="1.10.420.10:FF:000010">
    <property type="entry name" value="Peroxidase"/>
    <property type="match status" value="1"/>
</dbReference>
<dbReference type="FunFam" id="1.10.520.10:FF:000001">
    <property type="entry name" value="Peroxidase"/>
    <property type="match status" value="1"/>
</dbReference>
<dbReference type="Gene3D" id="1.10.520.10">
    <property type="match status" value="1"/>
</dbReference>
<dbReference type="Gene3D" id="1.10.420.10">
    <property type="entry name" value="Peroxidase, domain 2"/>
    <property type="match status" value="1"/>
</dbReference>
<dbReference type="InterPro" id="IPR002016">
    <property type="entry name" value="Haem_peroxidase"/>
</dbReference>
<dbReference type="InterPro" id="IPR010255">
    <property type="entry name" value="Haem_peroxidase_sf"/>
</dbReference>
<dbReference type="InterPro" id="IPR000823">
    <property type="entry name" value="Peroxidase_pln"/>
</dbReference>
<dbReference type="InterPro" id="IPR033905">
    <property type="entry name" value="Secretory_peroxidase"/>
</dbReference>
<dbReference type="PANTHER" id="PTHR31235">
    <property type="entry name" value="PEROXIDASE 25-RELATED"/>
    <property type="match status" value="1"/>
</dbReference>
<dbReference type="Pfam" id="PF00141">
    <property type="entry name" value="peroxidase"/>
    <property type="match status" value="1"/>
</dbReference>
<dbReference type="PRINTS" id="PR00458">
    <property type="entry name" value="PEROXIDASE"/>
</dbReference>
<dbReference type="PRINTS" id="PR00461">
    <property type="entry name" value="PLPEROXIDASE"/>
</dbReference>
<dbReference type="SUPFAM" id="SSF48113">
    <property type="entry name" value="Heme-dependent peroxidases"/>
    <property type="match status" value="1"/>
</dbReference>
<dbReference type="PROSITE" id="PS50873">
    <property type="entry name" value="PEROXIDASE_4"/>
    <property type="match status" value="1"/>
</dbReference>
<keyword id="KW-0025">Alternative splicing</keyword>
<keyword id="KW-0106">Calcium</keyword>
<keyword id="KW-1015">Disulfide bond</keyword>
<keyword id="KW-0325">Glycoprotein</keyword>
<keyword id="KW-0349">Heme</keyword>
<keyword id="KW-0376">Hydrogen peroxide</keyword>
<keyword id="KW-0408">Iron</keyword>
<keyword id="KW-0479">Metal-binding</keyword>
<keyword id="KW-0560">Oxidoreductase</keyword>
<keyword id="KW-0575">Peroxidase</keyword>
<keyword id="KW-1185">Reference proteome</keyword>
<keyword id="KW-0964">Secreted</keyword>
<keyword id="KW-0732">Signal</keyword>
<evidence type="ECO:0000255" key="1"/>
<evidence type="ECO:0000255" key="2">
    <source>
        <dbReference type="PROSITE-ProRule" id="PRU00297"/>
    </source>
</evidence>
<evidence type="ECO:0000269" key="3">
    <source>
    </source>
</evidence>
<evidence type="ECO:0000269" key="4">
    <source ref="5"/>
</evidence>
<name>PER62_ARATH</name>
<accession>Q9FKA4</accession>
<accession>P93724</accession>
<reference key="1">
    <citation type="journal article" date="1998" name="DNA Res.">
        <title>Structural analysis of Arabidopsis thaliana chromosome 5. VI. Sequence features of the regions of 1,367,185 bp covered by 19 physically assigned P1 and TAC clones.</title>
        <authorList>
            <person name="Kotani H."/>
            <person name="Nakamura Y."/>
            <person name="Sato S."/>
            <person name="Asamizu E."/>
            <person name="Kaneko T."/>
            <person name="Miyajima N."/>
            <person name="Tabata S."/>
        </authorList>
    </citation>
    <scope>NUCLEOTIDE SEQUENCE [LARGE SCALE GENOMIC DNA]</scope>
    <source>
        <strain>cv. Columbia</strain>
    </source>
</reference>
<reference key="2">
    <citation type="journal article" date="2017" name="Plant J.">
        <title>Araport11: a complete reannotation of the Arabidopsis thaliana reference genome.</title>
        <authorList>
            <person name="Cheng C.Y."/>
            <person name="Krishnakumar V."/>
            <person name="Chan A.P."/>
            <person name="Thibaud-Nissen F."/>
            <person name="Schobel S."/>
            <person name="Town C.D."/>
        </authorList>
    </citation>
    <scope>GENOME REANNOTATION</scope>
    <source>
        <strain>cv. Columbia</strain>
    </source>
</reference>
<reference key="3">
    <citation type="journal article" date="2003" name="Science">
        <title>Empirical analysis of transcriptional activity in the Arabidopsis genome.</title>
        <authorList>
            <person name="Yamada K."/>
            <person name="Lim J."/>
            <person name="Dale J.M."/>
            <person name="Chen H."/>
            <person name="Shinn P."/>
            <person name="Palm C.J."/>
            <person name="Southwick A.M."/>
            <person name="Wu H.C."/>
            <person name="Kim C.J."/>
            <person name="Nguyen M."/>
            <person name="Pham P.K."/>
            <person name="Cheuk R.F."/>
            <person name="Karlin-Newmann G."/>
            <person name="Liu S.X."/>
            <person name="Lam B."/>
            <person name="Sakano H."/>
            <person name="Wu T."/>
            <person name="Yu G."/>
            <person name="Miranda M."/>
            <person name="Quach H.L."/>
            <person name="Tripp M."/>
            <person name="Chang C.H."/>
            <person name="Lee J.M."/>
            <person name="Toriumi M.J."/>
            <person name="Chan M.M."/>
            <person name="Tang C.C."/>
            <person name="Onodera C.S."/>
            <person name="Deng J.M."/>
            <person name="Akiyama K."/>
            <person name="Ansari Y."/>
            <person name="Arakawa T."/>
            <person name="Banh J."/>
            <person name="Banno F."/>
            <person name="Bowser L."/>
            <person name="Brooks S.Y."/>
            <person name="Carninci P."/>
            <person name="Chao Q."/>
            <person name="Choy N."/>
            <person name="Enju A."/>
            <person name="Goldsmith A.D."/>
            <person name="Gurjal M."/>
            <person name="Hansen N.F."/>
            <person name="Hayashizaki Y."/>
            <person name="Johnson-Hopson C."/>
            <person name="Hsuan V.W."/>
            <person name="Iida K."/>
            <person name="Karnes M."/>
            <person name="Khan S."/>
            <person name="Koesema E."/>
            <person name="Ishida J."/>
            <person name="Jiang P.X."/>
            <person name="Jones T."/>
            <person name="Kawai J."/>
            <person name="Kamiya A."/>
            <person name="Meyers C."/>
            <person name="Nakajima M."/>
            <person name="Narusaka M."/>
            <person name="Seki M."/>
            <person name="Sakurai T."/>
            <person name="Satou M."/>
            <person name="Tamse R."/>
            <person name="Vaysberg M."/>
            <person name="Wallender E.K."/>
            <person name="Wong C."/>
            <person name="Yamamura Y."/>
            <person name="Yuan S."/>
            <person name="Shinozaki K."/>
            <person name="Davis R.W."/>
            <person name="Theologis A."/>
            <person name="Ecker J.R."/>
        </authorList>
    </citation>
    <scope>NUCLEOTIDE SEQUENCE [LARGE SCALE MRNA]</scope>
    <source>
        <strain>cv. Columbia</strain>
    </source>
</reference>
<reference key="4">
    <citation type="submission" date="1997-03" db="EMBL/GenBank/DDBJ databases">
        <title>From expressed sequence tags to structure, function, evolution and expression of 28 ER-targeted Arabidopsis peroxidases.</title>
        <authorList>
            <person name="Welinder K.G."/>
            <person name="Jespersen H.M."/>
            <person name="Kjaersgaard I.V.H."/>
            <person name="Justesen A.F."/>
            <person name="Oestergaard L."/>
            <person name="Abelskov A.K."/>
            <person name="Jensen R.B."/>
            <person name="Hansen L.N."/>
            <person name="Rasmussen S.K."/>
        </authorList>
    </citation>
    <scope>NUCLEOTIDE SEQUENCE [MRNA] OF 63-319</scope>
    <source>
        <strain>cv. Columbia</strain>
        <tissue>Etiolated seedling</tissue>
    </source>
</reference>
<reference key="5">
    <citation type="journal article" date="2001" name="Plant Physiol. Biochem.">
        <title>Toward elucidating the global gene expression patterns of developing Arabidopsis: parallel analysis of 8300 genes by a high-density oligonucleotide probe array.</title>
        <authorList>
            <person name="Zhu T."/>
            <person name="Budworth P."/>
            <person name="Han B."/>
            <person name="Brown D."/>
            <person name="Chang H.-S."/>
            <person name="Zou G."/>
            <person name="Wang X."/>
        </authorList>
    </citation>
    <scope>TISSUE SPECIFICITY</scope>
    <source>
        <strain>cv. Columbia</strain>
    </source>
</reference>
<reference key="6">
    <citation type="journal article" date="2002" name="Plant Physiol.">
        <title>Transcriptional profiling reveals novel interactions between wounding, pathogen, abiotic stress, and hormonal responses in Arabidopsis.</title>
        <authorList>
            <person name="Cheong Y.H."/>
            <person name="Chang H.-S."/>
            <person name="Gupta R."/>
            <person name="Wang X."/>
            <person name="Zhu T."/>
            <person name="Luan S."/>
        </authorList>
    </citation>
    <scope>INDUCTION</scope>
    <source>
        <strain>cv. Columbia</strain>
    </source>
</reference>
<reference key="7">
    <citation type="journal article" date="2002" name="Gene">
        <title>Analysis and expression of the class III peroxidase large gene family in Arabidopsis thaliana.</title>
        <authorList>
            <person name="Tognolli M."/>
            <person name="Penel C."/>
            <person name="Greppin H."/>
            <person name="Simon P."/>
        </authorList>
    </citation>
    <scope>GENE FAMILY ORGANIZATION</scope>
    <scope>NOMENCLATURE</scope>
    <source>
        <strain>cv. Columbia</strain>
    </source>
</reference>
<organism>
    <name type="scientific">Arabidopsis thaliana</name>
    <name type="common">Mouse-ear cress</name>
    <dbReference type="NCBI Taxonomy" id="3702"/>
    <lineage>
        <taxon>Eukaryota</taxon>
        <taxon>Viridiplantae</taxon>
        <taxon>Streptophyta</taxon>
        <taxon>Embryophyta</taxon>
        <taxon>Tracheophyta</taxon>
        <taxon>Spermatophyta</taxon>
        <taxon>Magnoliopsida</taxon>
        <taxon>eudicotyledons</taxon>
        <taxon>Gunneridae</taxon>
        <taxon>Pentapetalae</taxon>
        <taxon>rosids</taxon>
        <taxon>malvids</taxon>
        <taxon>Brassicales</taxon>
        <taxon>Brassicaceae</taxon>
        <taxon>Camelineae</taxon>
        <taxon>Arabidopsis</taxon>
    </lineage>
</organism>
<protein>
    <recommendedName>
        <fullName>Peroxidase 62</fullName>
        <shortName>Atperox P62</shortName>
        <ecNumber>1.11.1.7</ecNumber>
    </recommendedName>
    <alternativeName>
        <fullName>ATP24a</fullName>
    </alternativeName>
</protein>
<feature type="signal peptide" evidence="1">
    <location>
        <begin position="1"/>
        <end position="22"/>
    </location>
</feature>
<feature type="chain" id="PRO_0000023727" description="Peroxidase 62">
    <location>
        <begin position="23"/>
        <end position="319"/>
    </location>
</feature>
<feature type="active site" description="Proton acceptor" evidence="2">
    <location>
        <position position="65"/>
    </location>
</feature>
<feature type="binding site" evidence="2">
    <location>
        <position position="66"/>
    </location>
    <ligand>
        <name>Ca(2+)</name>
        <dbReference type="ChEBI" id="CHEBI:29108"/>
        <label>1</label>
    </ligand>
</feature>
<feature type="binding site" evidence="2">
    <location>
        <position position="69"/>
    </location>
    <ligand>
        <name>Ca(2+)</name>
        <dbReference type="ChEBI" id="CHEBI:29108"/>
        <label>1</label>
    </ligand>
</feature>
<feature type="binding site" evidence="2">
    <location>
        <position position="71"/>
    </location>
    <ligand>
        <name>Ca(2+)</name>
        <dbReference type="ChEBI" id="CHEBI:29108"/>
        <label>1</label>
    </ligand>
</feature>
<feature type="binding site" evidence="2">
    <location>
        <position position="73"/>
    </location>
    <ligand>
        <name>Ca(2+)</name>
        <dbReference type="ChEBI" id="CHEBI:29108"/>
        <label>1</label>
    </ligand>
</feature>
<feature type="binding site" evidence="2">
    <location>
        <position position="75"/>
    </location>
    <ligand>
        <name>Ca(2+)</name>
        <dbReference type="ChEBI" id="CHEBI:29108"/>
        <label>1</label>
    </ligand>
</feature>
<feature type="binding site" evidence="2">
    <location>
        <position position="157"/>
    </location>
    <ligand>
        <name>substrate</name>
    </ligand>
</feature>
<feature type="binding site" description="axial binding residue" evidence="2">
    <location>
        <position position="188"/>
    </location>
    <ligand>
        <name>heme b</name>
        <dbReference type="ChEBI" id="CHEBI:60344"/>
    </ligand>
    <ligandPart>
        <name>Fe</name>
        <dbReference type="ChEBI" id="CHEBI:18248"/>
    </ligandPart>
</feature>
<feature type="binding site" evidence="2">
    <location>
        <position position="189"/>
    </location>
    <ligand>
        <name>Ca(2+)</name>
        <dbReference type="ChEBI" id="CHEBI:29108"/>
        <label>2</label>
    </ligand>
</feature>
<feature type="binding site" evidence="2">
    <location>
        <position position="239"/>
    </location>
    <ligand>
        <name>Ca(2+)</name>
        <dbReference type="ChEBI" id="CHEBI:29108"/>
        <label>2</label>
    </ligand>
</feature>
<feature type="binding site" evidence="2">
    <location>
        <position position="242"/>
    </location>
    <ligand>
        <name>Ca(2+)</name>
        <dbReference type="ChEBI" id="CHEBI:29108"/>
        <label>2</label>
    </ligand>
</feature>
<feature type="binding site" evidence="2">
    <location>
        <position position="247"/>
    </location>
    <ligand>
        <name>Ca(2+)</name>
        <dbReference type="ChEBI" id="CHEBI:29108"/>
        <label>2</label>
    </ligand>
</feature>
<feature type="site" description="Transition state stabilizer" evidence="2">
    <location>
        <position position="61"/>
    </location>
</feature>
<feature type="glycosylation site" description="N-linked (GlcNAc...) asparagine" evidence="1">
    <location>
        <position position="204"/>
    </location>
</feature>
<feature type="glycosylation site" description="N-linked (GlcNAc...) asparagine" evidence="1">
    <location>
        <position position="253"/>
    </location>
</feature>
<feature type="disulfide bond" evidence="2">
    <location>
        <begin position="34"/>
        <end position="110"/>
    </location>
</feature>
<feature type="disulfide bond" evidence="2">
    <location>
        <begin position="67"/>
        <end position="72"/>
    </location>
</feature>
<feature type="disulfide bond" evidence="2">
    <location>
        <begin position="116"/>
        <end position="315"/>
    </location>
</feature>
<feature type="disulfide bond" evidence="2">
    <location>
        <begin position="195"/>
        <end position="226"/>
    </location>
</feature>
<sequence>MGLVRSFALVIVFLSCLIAVYGQGTRIGFYSTTCPNAETIVRTTVASHFGSDPKVAPGLLRMHNHDCFVQGCDGSVLLSGPNSERTAGANVNLHGFEVIDDAKRQLEAACPGVVSCADILALAARDSVSLTNGQSWQVPTGRRDGRVSLASNVNNLPSPSDSLAIQQRKFSAFRLNTRDLVTLVGGGHTIGTAACGFITNRIFNSSGNTADPTMDQTFVPQLQRLCPQNGDGSARVDLDTGSGNTFDTSYFINLSRNRGILQSDHVLWTSPATRSIVQEFMAPRGNFNVQFARSMVKMSNIGVKTGTNGEIRRVCSAVN</sequence>